<accession>E2RDZ6</accession>
<name>SIR5_CANLF</name>
<comment type="function">
    <text evidence="2">NAD-dependent lysine demalonylase, desuccinylase and deglutarylase that specifically removes malonyl, succinyl and glutaryl groups on target proteins. Activates CPS1 and contributes to the regulation of blood ammonia levels during prolonged fasting: acts by mediating desuccinylation and deglutarylation of CPS1, thereby increasing CPS1 activity in response to elevated NAD levels during fasting. Activates SOD1 by mediating its desuccinylation, leading to reduced reactive oxygen species. Activates SHMT2 by mediating its desuccinylation. Modulates ketogenesis through the desuccinylation and activation of HMGCS2. Has weak NAD-dependent protein deacetylase activity; however this activity may not be physiologically relevant in vivo. Can deacetylate cytochrome c (CYCS) and a number of other proteins in vitro such as UOX.</text>
</comment>
<comment type="catalytic activity">
    <reaction evidence="2">
        <text>N(6)-malonyl-L-lysyl-[protein] + NAD(+) + H2O = 2''-O-malonyl-ADP-D-ribose + nicotinamide + L-lysyl-[protein]</text>
        <dbReference type="Rhea" id="RHEA:47672"/>
        <dbReference type="Rhea" id="RHEA-COMP:9752"/>
        <dbReference type="Rhea" id="RHEA-COMP:11878"/>
        <dbReference type="ChEBI" id="CHEBI:15377"/>
        <dbReference type="ChEBI" id="CHEBI:17154"/>
        <dbReference type="ChEBI" id="CHEBI:29969"/>
        <dbReference type="ChEBI" id="CHEBI:57540"/>
        <dbReference type="ChEBI" id="CHEBI:87831"/>
        <dbReference type="ChEBI" id="CHEBI:87833"/>
    </reaction>
</comment>
<comment type="catalytic activity">
    <reaction evidence="2">
        <text>N(6)-succinyl-L-lysyl-[protein] + NAD(+) + H2O = 2''-O-succinyl-ADP-D-ribose + nicotinamide + L-lysyl-[protein]</text>
        <dbReference type="Rhea" id="RHEA:47668"/>
        <dbReference type="Rhea" id="RHEA-COMP:9752"/>
        <dbReference type="Rhea" id="RHEA-COMP:11877"/>
        <dbReference type="ChEBI" id="CHEBI:15377"/>
        <dbReference type="ChEBI" id="CHEBI:17154"/>
        <dbReference type="ChEBI" id="CHEBI:29969"/>
        <dbReference type="ChEBI" id="CHEBI:57540"/>
        <dbReference type="ChEBI" id="CHEBI:87830"/>
        <dbReference type="ChEBI" id="CHEBI:87832"/>
    </reaction>
</comment>
<comment type="catalytic activity">
    <reaction evidence="2">
        <text>N(6)-glutaryl-L-lysyl-[protein] + NAD(+) + H2O = 2''-O-glutaryl-ADP-D-ribose + nicotinamide + L-lysyl-[protein]</text>
        <dbReference type="Rhea" id="RHEA:47664"/>
        <dbReference type="Rhea" id="RHEA-COMP:9752"/>
        <dbReference type="Rhea" id="RHEA-COMP:11875"/>
        <dbReference type="ChEBI" id="CHEBI:15377"/>
        <dbReference type="ChEBI" id="CHEBI:17154"/>
        <dbReference type="ChEBI" id="CHEBI:29969"/>
        <dbReference type="ChEBI" id="CHEBI:57540"/>
        <dbReference type="ChEBI" id="CHEBI:87828"/>
        <dbReference type="ChEBI" id="CHEBI:87829"/>
    </reaction>
</comment>
<comment type="cofactor">
    <cofactor evidence="2">
        <name>Zn(2+)</name>
        <dbReference type="ChEBI" id="CHEBI:29105"/>
    </cofactor>
    <text evidence="2">Binds 1 zinc ion per subunit.</text>
</comment>
<comment type="subunit">
    <text evidence="1 2">Monomer. Homodimer. Interacts with CPS1. Interacts with PCCA (By similarity).</text>
</comment>
<comment type="subcellular location">
    <subcellularLocation>
        <location evidence="2">Mitochondrion</location>
    </subcellularLocation>
    <subcellularLocation>
        <location evidence="2">Cytoplasm</location>
        <location evidence="2">Cytosol</location>
    </subcellularLocation>
    <subcellularLocation>
        <location evidence="2">Nucleus</location>
    </subcellularLocation>
    <text evidence="2">Mainly mitochondrial. Also present extramitochondrially, with a fraction present in the cytosol and very small amounts also detected in the nucleus.</text>
</comment>
<comment type="domain">
    <text evidence="2">In contrast to class I sirtuins, class III sirtuins have only weak deacetylase activity. Difference in substrate specificity is probably due to a larger hydrophobic pocket with 2 residues (Tyr-102 and Arg-105) that bind to malonylated and succinylated substrates and define the specificity.</text>
</comment>
<comment type="similarity">
    <text evidence="2">Belongs to the sirtuin family. Class III subfamily.</text>
</comment>
<dbReference type="EC" id="2.3.1.-" evidence="2"/>
<dbReference type="RefSeq" id="NP_001300734.1">
    <property type="nucleotide sequence ID" value="NM_001313805.2"/>
</dbReference>
<dbReference type="SMR" id="E2RDZ6"/>
<dbReference type="FunCoup" id="E2RDZ6">
    <property type="interactions" value="48"/>
</dbReference>
<dbReference type="STRING" id="9615.ENSCAFP00000058260"/>
<dbReference type="SwissPalm" id="E2RDZ6"/>
<dbReference type="PaxDb" id="9612-ENSCAFP00000014453"/>
<dbReference type="Ensembl" id="ENSCAFT00000075926.2">
    <property type="protein sequence ID" value="ENSCAFP00000045848.2"/>
    <property type="gene ID" value="ENSCAFG00000009838.5"/>
</dbReference>
<dbReference type="GeneID" id="478726"/>
<dbReference type="KEGG" id="cfa:478726"/>
<dbReference type="CTD" id="23408"/>
<dbReference type="VGNC" id="VGNC:46186">
    <property type="gene designation" value="SIRT5"/>
</dbReference>
<dbReference type="eggNOG" id="KOG2684">
    <property type="taxonomic scope" value="Eukaryota"/>
</dbReference>
<dbReference type="HOGENOM" id="CLU_023643_3_1_1"/>
<dbReference type="InParanoid" id="E2RDZ6"/>
<dbReference type="OMA" id="LIHMHGE"/>
<dbReference type="OrthoDB" id="424302at2759"/>
<dbReference type="TreeFam" id="TF106183"/>
<dbReference type="Proteomes" id="UP000002254">
    <property type="component" value="Chromosome 35"/>
</dbReference>
<dbReference type="Proteomes" id="UP000694429">
    <property type="component" value="Unplaced"/>
</dbReference>
<dbReference type="Proteomes" id="UP000694542">
    <property type="component" value="Unplaced"/>
</dbReference>
<dbReference type="Proteomes" id="UP000805418">
    <property type="component" value="Unplaced"/>
</dbReference>
<dbReference type="GO" id="GO:0005829">
    <property type="term" value="C:cytosol"/>
    <property type="evidence" value="ECO:0000250"/>
    <property type="project" value="UniProtKB"/>
</dbReference>
<dbReference type="GO" id="GO:0005739">
    <property type="term" value="C:mitochondrion"/>
    <property type="evidence" value="ECO:0000250"/>
    <property type="project" value="UniProtKB"/>
</dbReference>
<dbReference type="GO" id="GO:0005730">
    <property type="term" value="C:nucleolus"/>
    <property type="evidence" value="ECO:0000318"/>
    <property type="project" value="GO_Central"/>
</dbReference>
<dbReference type="GO" id="GO:0070403">
    <property type="term" value="F:NAD+ binding"/>
    <property type="evidence" value="ECO:0007669"/>
    <property type="project" value="UniProtKB-UniRule"/>
</dbReference>
<dbReference type="GO" id="GO:0034979">
    <property type="term" value="F:NAD-dependent protein lysine deacetylase activity"/>
    <property type="evidence" value="ECO:0007669"/>
    <property type="project" value="UniProtKB-UniRule"/>
</dbReference>
<dbReference type="GO" id="GO:0061697">
    <property type="term" value="F:protein-glutaryllysine deglutarylase activity"/>
    <property type="evidence" value="ECO:0007669"/>
    <property type="project" value="RHEA"/>
</dbReference>
<dbReference type="GO" id="GO:0036054">
    <property type="term" value="F:protein-malonyllysine demalonylase activity"/>
    <property type="evidence" value="ECO:0000250"/>
    <property type="project" value="UniProtKB"/>
</dbReference>
<dbReference type="GO" id="GO:0036055">
    <property type="term" value="F:protein-succinyllysine desuccinylase activity"/>
    <property type="evidence" value="ECO:0000250"/>
    <property type="project" value="UniProtKB"/>
</dbReference>
<dbReference type="GO" id="GO:0008270">
    <property type="term" value="F:zinc ion binding"/>
    <property type="evidence" value="ECO:0007669"/>
    <property type="project" value="UniProtKB-UniRule"/>
</dbReference>
<dbReference type="GO" id="GO:0036046">
    <property type="term" value="P:protein demalonylation"/>
    <property type="evidence" value="ECO:0000250"/>
    <property type="project" value="UniProtKB"/>
</dbReference>
<dbReference type="GO" id="GO:0036048">
    <property type="term" value="P:protein desuccinylation"/>
    <property type="evidence" value="ECO:0000250"/>
    <property type="project" value="UniProtKB"/>
</dbReference>
<dbReference type="GO" id="GO:0010566">
    <property type="term" value="P:regulation of ketone biosynthetic process"/>
    <property type="evidence" value="ECO:0000250"/>
    <property type="project" value="UniProtKB"/>
</dbReference>
<dbReference type="CDD" id="cd01412">
    <property type="entry name" value="SIRT5_Af1_CobB"/>
    <property type="match status" value="1"/>
</dbReference>
<dbReference type="FunFam" id="3.30.1600.10:FF:000005">
    <property type="entry name" value="NAD-dependent protein deacylase sirtuin-5, mitochondrial"/>
    <property type="match status" value="1"/>
</dbReference>
<dbReference type="Gene3D" id="3.30.1600.10">
    <property type="entry name" value="SIR2/SIRT2 'Small Domain"/>
    <property type="match status" value="1"/>
</dbReference>
<dbReference type="Gene3D" id="3.40.50.1220">
    <property type="entry name" value="TPP-binding domain"/>
    <property type="match status" value="1"/>
</dbReference>
<dbReference type="HAMAP" id="MF_01121">
    <property type="entry name" value="Sirtuin_ClassIII"/>
    <property type="match status" value="1"/>
</dbReference>
<dbReference type="InterPro" id="IPR029035">
    <property type="entry name" value="DHS-like_NAD/FAD-binding_dom"/>
</dbReference>
<dbReference type="InterPro" id="IPR003000">
    <property type="entry name" value="Sirtuin"/>
</dbReference>
<dbReference type="InterPro" id="IPR026591">
    <property type="entry name" value="Sirtuin_cat_small_dom_sf"/>
</dbReference>
<dbReference type="InterPro" id="IPR027546">
    <property type="entry name" value="Sirtuin_class_III"/>
</dbReference>
<dbReference type="InterPro" id="IPR026590">
    <property type="entry name" value="Ssirtuin_cat_dom"/>
</dbReference>
<dbReference type="PANTHER" id="PTHR32337">
    <property type="entry name" value="NUCLEOLAR PROTEIN 7"/>
    <property type="match status" value="1"/>
</dbReference>
<dbReference type="PANTHER" id="PTHR32337:SF2">
    <property type="entry name" value="NUCLEOLAR PROTEIN 7"/>
    <property type="match status" value="1"/>
</dbReference>
<dbReference type="Pfam" id="PF02146">
    <property type="entry name" value="SIR2"/>
    <property type="match status" value="1"/>
</dbReference>
<dbReference type="SUPFAM" id="SSF52467">
    <property type="entry name" value="DHS-like NAD/FAD-binding domain"/>
    <property type="match status" value="1"/>
</dbReference>
<dbReference type="PROSITE" id="PS50305">
    <property type="entry name" value="SIRTUIN"/>
    <property type="match status" value="1"/>
</dbReference>
<reference key="1">
    <citation type="journal article" date="2005" name="Nature">
        <title>Genome sequence, comparative analysis and haplotype structure of the domestic dog.</title>
        <authorList>
            <person name="Lindblad-Toh K."/>
            <person name="Wade C.M."/>
            <person name="Mikkelsen T.S."/>
            <person name="Karlsson E.K."/>
            <person name="Jaffe D.B."/>
            <person name="Kamal M."/>
            <person name="Clamp M."/>
            <person name="Chang J.L."/>
            <person name="Kulbokas E.J. III"/>
            <person name="Zody M.C."/>
            <person name="Mauceli E."/>
            <person name="Xie X."/>
            <person name="Breen M."/>
            <person name="Wayne R.K."/>
            <person name="Ostrander E.A."/>
            <person name="Ponting C.P."/>
            <person name="Galibert F."/>
            <person name="Smith D.R."/>
            <person name="deJong P.J."/>
            <person name="Kirkness E.F."/>
            <person name="Alvarez P."/>
            <person name="Biagi T."/>
            <person name="Brockman W."/>
            <person name="Butler J."/>
            <person name="Chin C.-W."/>
            <person name="Cook A."/>
            <person name="Cuff J."/>
            <person name="Daly M.J."/>
            <person name="DeCaprio D."/>
            <person name="Gnerre S."/>
            <person name="Grabherr M."/>
            <person name="Kellis M."/>
            <person name="Kleber M."/>
            <person name="Bardeleben C."/>
            <person name="Goodstadt L."/>
            <person name="Heger A."/>
            <person name="Hitte C."/>
            <person name="Kim L."/>
            <person name="Koepfli K.-P."/>
            <person name="Parker H.G."/>
            <person name="Pollinger J.P."/>
            <person name="Searle S.M.J."/>
            <person name="Sutter N.B."/>
            <person name="Thomas R."/>
            <person name="Webber C."/>
            <person name="Baldwin J."/>
            <person name="Abebe A."/>
            <person name="Abouelleil A."/>
            <person name="Aftuck L."/>
            <person name="Ait-Zahra M."/>
            <person name="Aldredge T."/>
            <person name="Allen N."/>
            <person name="An P."/>
            <person name="Anderson S."/>
            <person name="Antoine C."/>
            <person name="Arachchi H."/>
            <person name="Aslam A."/>
            <person name="Ayotte L."/>
            <person name="Bachantsang P."/>
            <person name="Barry A."/>
            <person name="Bayul T."/>
            <person name="Benamara M."/>
            <person name="Berlin A."/>
            <person name="Bessette D."/>
            <person name="Blitshteyn B."/>
            <person name="Bloom T."/>
            <person name="Blye J."/>
            <person name="Boguslavskiy L."/>
            <person name="Bonnet C."/>
            <person name="Boukhgalter B."/>
            <person name="Brown A."/>
            <person name="Cahill P."/>
            <person name="Calixte N."/>
            <person name="Camarata J."/>
            <person name="Cheshatsang Y."/>
            <person name="Chu J."/>
            <person name="Citroen M."/>
            <person name="Collymore A."/>
            <person name="Cooke P."/>
            <person name="Dawoe T."/>
            <person name="Daza R."/>
            <person name="Decktor K."/>
            <person name="DeGray S."/>
            <person name="Dhargay N."/>
            <person name="Dooley K."/>
            <person name="Dooley K."/>
            <person name="Dorje P."/>
            <person name="Dorjee K."/>
            <person name="Dorris L."/>
            <person name="Duffey N."/>
            <person name="Dupes A."/>
            <person name="Egbiremolen O."/>
            <person name="Elong R."/>
            <person name="Falk J."/>
            <person name="Farina A."/>
            <person name="Faro S."/>
            <person name="Ferguson D."/>
            <person name="Ferreira P."/>
            <person name="Fisher S."/>
            <person name="FitzGerald M."/>
            <person name="Foley K."/>
            <person name="Foley C."/>
            <person name="Franke A."/>
            <person name="Friedrich D."/>
            <person name="Gage D."/>
            <person name="Garber M."/>
            <person name="Gearin G."/>
            <person name="Giannoukos G."/>
            <person name="Goode T."/>
            <person name="Goyette A."/>
            <person name="Graham J."/>
            <person name="Grandbois E."/>
            <person name="Gyaltsen K."/>
            <person name="Hafez N."/>
            <person name="Hagopian D."/>
            <person name="Hagos B."/>
            <person name="Hall J."/>
            <person name="Healy C."/>
            <person name="Hegarty R."/>
            <person name="Honan T."/>
            <person name="Horn A."/>
            <person name="Houde N."/>
            <person name="Hughes L."/>
            <person name="Hunnicutt L."/>
            <person name="Husby M."/>
            <person name="Jester B."/>
            <person name="Jones C."/>
            <person name="Kamat A."/>
            <person name="Kanga B."/>
            <person name="Kells C."/>
            <person name="Khazanovich D."/>
            <person name="Kieu A.C."/>
            <person name="Kisner P."/>
            <person name="Kumar M."/>
            <person name="Lance K."/>
            <person name="Landers T."/>
            <person name="Lara M."/>
            <person name="Lee W."/>
            <person name="Leger J.-P."/>
            <person name="Lennon N."/>
            <person name="Leuper L."/>
            <person name="LeVine S."/>
            <person name="Liu J."/>
            <person name="Liu X."/>
            <person name="Lokyitsang Y."/>
            <person name="Lokyitsang T."/>
            <person name="Lui A."/>
            <person name="Macdonald J."/>
            <person name="Major J."/>
            <person name="Marabella R."/>
            <person name="Maru K."/>
            <person name="Matthews C."/>
            <person name="McDonough S."/>
            <person name="Mehta T."/>
            <person name="Meldrim J."/>
            <person name="Melnikov A."/>
            <person name="Meneus L."/>
            <person name="Mihalev A."/>
            <person name="Mihova T."/>
            <person name="Miller K."/>
            <person name="Mittelman R."/>
            <person name="Mlenga V."/>
            <person name="Mulrain L."/>
            <person name="Munson G."/>
            <person name="Navidi A."/>
            <person name="Naylor J."/>
            <person name="Nguyen T."/>
            <person name="Nguyen N."/>
            <person name="Nguyen C."/>
            <person name="Nguyen T."/>
            <person name="Nicol R."/>
            <person name="Norbu N."/>
            <person name="Norbu C."/>
            <person name="Novod N."/>
            <person name="Nyima T."/>
            <person name="Olandt P."/>
            <person name="O'Neill B."/>
            <person name="O'Neill K."/>
            <person name="Osman S."/>
            <person name="Oyono L."/>
            <person name="Patti C."/>
            <person name="Perrin D."/>
            <person name="Phunkhang P."/>
            <person name="Pierre F."/>
            <person name="Priest M."/>
            <person name="Rachupka A."/>
            <person name="Raghuraman S."/>
            <person name="Rameau R."/>
            <person name="Ray V."/>
            <person name="Raymond C."/>
            <person name="Rege F."/>
            <person name="Rise C."/>
            <person name="Rogers J."/>
            <person name="Rogov P."/>
            <person name="Sahalie J."/>
            <person name="Settipalli S."/>
            <person name="Sharpe T."/>
            <person name="Shea T."/>
            <person name="Sheehan M."/>
            <person name="Sherpa N."/>
            <person name="Shi J."/>
            <person name="Shih D."/>
            <person name="Sloan J."/>
            <person name="Smith C."/>
            <person name="Sparrow T."/>
            <person name="Stalker J."/>
            <person name="Stange-Thomann N."/>
            <person name="Stavropoulos S."/>
            <person name="Stone C."/>
            <person name="Stone S."/>
            <person name="Sykes S."/>
            <person name="Tchuinga P."/>
            <person name="Tenzing P."/>
            <person name="Tesfaye S."/>
            <person name="Thoulutsang D."/>
            <person name="Thoulutsang Y."/>
            <person name="Topham K."/>
            <person name="Topping I."/>
            <person name="Tsamla T."/>
            <person name="Vassiliev H."/>
            <person name="Venkataraman V."/>
            <person name="Vo A."/>
            <person name="Wangchuk T."/>
            <person name="Wangdi T."/>
            <person name="Weiand M."/>
            <person name="Wilkinson J."/>
            <person name="Wilson A."/>
            <person name="Yadav S."/>
            <person name="Yang S."/>
            <person name="Yang X."/>
            <person name="Young G."/>
            <person name="Yu Q."/>
            <person name="Zainoun J."/>
            <person name="Zembek L."/>
            <person name="Zimmer A."/>
            <person name="Lander E.S."/>
        </authorList>
    </citation>
    <scope>NUCLEOTIDE SEQUENCE [LARGE SCALE GENOMIC DNA]</scope>
    <source>
        <strain>Boxer</strain>
    </source>
</reference>
<protein>
    <recommendedName>
        <fullName evidence="2">NAD-dependent protein deacylase sirtuin-5, mitochondrial</fullName>
        <ecNumber evidence="2">2.3.1.-</ecNumber>
    </recommendedName>
    <alternativeName>
        <fullName evidence="2">Regulatory protein SIR2 homolog 5</fullName>
    </alternativeName>
    <alternativeName>
        <fullName evidence="2">SIR2-like protein 5</fullName>
    </alternativeName>
</protein>
<organism>
    <name type="scientific">Canis lupus familiaris</name>
    <name type="common">Dog</name>
    <name type="synonym">Canis familiaris</name>
    <dbReference type="NCBI Taxonomy" id="9615"/>
    <lineage>
        <taxon>Eukaryota</taxon>
        <taxon>Metazoa</taxon>
        <taxon>Chordata</taxon>
        <taxon>Craniata</taxon>
        <taxon>Vertebrata</taxon>
        <taxon>Euteleostomi</taxon>
        <taxon>Mammalia</taxon>
        <taxon>Eutheria</taxon>
        <taxon>Laurasiatheria</taxon>
        <taxon>Carnivora</taxon>
        <taxon>Caniformia</taxon>
        <taxon>Canidae</taxon>
        <taxon>Canis</taxon>
    </lineage>
</organism>
<evidence type="ECO:0000250" key="1">
    <source>
        <dbReference type="UniProtKB" id="Q9NXA8"/>
    </source>
</evidence>
<evidence type="ECO:0000255" key="2">
    <source>
        <dbReference type="HAMAP-Rule" id="MF_03160"/>
    </source>
</evidence>
<evidence type="ECO:0000255" key="3">
    <source>
        <dbReference type="PROSITE-ProRule" id="PRU00236"/>
    </source>
</evidence>
<keyword id="KW-0963">Cytoplasm</keyword>
<keyword id="KW-0479">Metal-binding</keyword>
<keyword id="KW-0496">Mitochondrion</keyword>
<keyword id="KW-0520">NAD</keyword>
<keyword id="KW-0539">Nucleus</keyword>
<keyword id="KW-1185">Reference proteome</keyword>
<keyword id="KW-0808">Transferase</keyword>
<keyword id="KW-0809">Transit peptide</keyword>
<keyword id="KW-0862">Zinc</keyword>
<proteinExistence type="inferred from homology"/>
<gene>
    <name evidence="2" type="primary">SIRT5</name>
</gene>
<feature type="transit peptide" description="Mitochondrion" evidence="2">
    <location>
        <begin position="1"/>
        <end position="36"/>
    </location>
</feature>
<feature type="chain" id="PRO_0000417336" description="NAD-dependent protein deacylase sirtuin-5, mitochondrial">
    <location>
        <begin position="37"/>
        <end position="310"/>
    </location>
</feature>
<feature type="domain" description="Deacetylase sirtuin-type" evidence="3">
    <location>
        <begin position="37"/>
        <end position="307"/>
    </location>
</feature>
<feature type="active site" description="Proton acceptor" evidence="3">
    <location>
        <position position="158"/>
    </location>
</feature>
<feature type="binding site" evidence="2">
    <location>
        <begin position="58"/>
        <end position="77"/>
    </location>
    <ligand>
        <name>NAD(+)</name>
        <dbReference type="ChEBI" id="CHEBI:57540"/>
    </ligand>
</feature>
<feature type="binding site" evidence="2">
    <location>
        <position position="102"/>
    </location>
    <ligand>
        <name>substrate</name>
    </ligand>
</feature>
<feature type="binding site" evidence="2">
    <location>
        <position position="105"/>
    </location>
    <ligand>
        <name>substrate</name>
    </ligand>
</feature>
<feature type="binding site" evidence="2">
    <location>
        <begin position="140"/>
        <end position="143"/>
    </location>
    <ligand>
        <name>NAD(+)</name>
        <dbReference type="ChEBI" id="CHEBI:57540"/>
    </ligand>
</feature>
<feature type="binding site" evidence="2">
    <location>
        <position position="166"/>
    </location>
    <ligand>
        <name>Zn(2+)</name>
        <dbReference type="ChEBI" id="CHEBI:29105"/>
    </ligand>
</feature>
<feature type="binding site" evidence="2">
    <location>
        <position position="169"/>
    </location>
    <ligand>
        <name>Zn(2+)</name>
        <dbReference type="ChEBI" id="CHEBI:29105"/>
    </ligand>
</feature>
<feature type="binding site" evidence="2">
    <location>
        <position position="207"/>
    </location>
    <ligand>
        <name>Zn(2+)</name>
        <dbReference type="ChEBI" id="CHEBI:29105"/>
    </ligand>
</feature>
<feature type="binding site" evidence="2">
    <location>
        <position position="212"/>
    </location>
    <ligand>
        <name>Zn(2+)</name>
        <dbReference type="ChEBI" id="CHEBI:29105"/>
    </ligand>
</feature>
<feature type="binding site" evidence="2">
    <location>
        <begin position="249"/>
        <end position="251"/>
    </location>
    <ligand>
        <name>NAD(+)</name>
        <dbReference type="ChEBI" id="CHEBI:57540"/>
    </ligand>
</feature>
<feature type="binding site" evidence="2">
    <location>
        <begin position="275"/>
        <end position="277"/>
    </location>
    <ligand>
        <name>NAD(+)</name>
        <dbReference type="ChEBI" id="CHEBI:57540"/>
    </ligand>
</feature>
<feature type="binding site" evidence="2">
    <location>
        <position position="293"/>
    </location>
    <ligand>
        <name>NAD(+)</name>
        <dbReference type="ChEBI" id="CHEBI:57540"/>
    </ligand>
</feature>
<sequence>MQPLQIAPCRLLYGLYRGLKSPASTGTRICPAMARPSSNMADFRKLFAKAKHIVIISGAGVSAESGVPTFRGAGGYWRKWQAQDLATPQAFARNPSLVWEFYHYRREVMLSKEPNPGHLAIAECEARLREQGRRVMVITQNIDELHRRAGTKNLLEIHGSLFKTRCTSCGIVAENYKSPICPALSGKGAPDPEAQDARIPVEKLPRCEEAGCGGLLRPHVVWFGENLDPAILEEVDKELTLCDLCLVVGTSSVVYPAAMFAPQVSARGVPVAEFNMETTPATNRFRFHFQGPCGTTLPEALAPHETGNVS</sequence>